<gene>
    <name type="primary">RPL4</name>
</gene>
<accession>Q58DW0</accession>
<accession>Q3T088</accession>
<evidence type="ECO:0000250" key="1">
    <source>
        <dbReference type="UniProtKB" id="P36578"/>
    </source>
</evidence>
<evidence type="ECO:0000250" key="2">
    <source>
        <dbReference type="UniProtKB" id="P50878"/>
    </source>
</evidence>
<evidence type="ECO:0000250" key="3">
    <source>
        <dbReference type="UniProtKB" id="Q9D8E6"/>
    </source>
</evidence>
<evidence type="ECO:0000256" key="4">
    <source>
        <dbReference type="SAM" id="MobiDB-lite"/>
    </source>
</evidence>
<evidence type="ECO:0000305" key="5"/>
<reference key="1">
    <citation type="journal article" date="2005" name="BMC Genomics">
        <title>Characterization of 954 bovine full-CDS cDNA sequences.</title>
        <authorList>
            <person name="Harhay G.P."/>
            <person name="Sonstegard T.S."/>
            <person name="Keele J.W."/>
            <person name="Heaton M.P."/>
            <person name="Clawson M.L."/>
            <person name="Snelling W.M."/>
            <person name="Wiedmann R.T."/>
            <person name="Van Tassell C.P."/>
            <person name="Smith T.P.L."/>
        </authorList>
    </citation>
    <scope>NUCLEOTIDE SEQUENCE [LARGE SCALE MRNA]</scope>
</reference>
<reference key="2">
    <citation type="submission" date="2005-08" db="EMBL/GenBank/DDBJ databases">
        <authorList>
            <consortium name="NIH - Mammalian Gene Collection (MGC) project"/>
        </authorList>
    </citation>
    <scope>NUCLEOTIDE SEQUENCE [LARGE SCALE MRNA]</scope>
    <source>
        <strain>Crossbred X Angus</strain>
        <tissue>Ileum</tissue>
    </source>
</reference>
<dbReference type="EMBL" id="BT021487">
    <property type="protein sequence ID" value="AAX46334.1"/>
    <property type="molecule type" value="mRNA"/>
</dbReference>
<dbReference type="EMBL" id="BC102521">
    <property type="protein sequence ID" value="AAI02522.1"/>
    <property type="molecule type" value="mRNA"/>
</dbReference>
<dbReference type="RefSeq" id="NP_001014894.1">
    <property type="nucleotide sequence ID" value="NM_001014894.1"/>
</dbReference>
<dbReference type="SMR" id="Q58DW0"/>
<dbReference type="FunCoup" id="Q58DW0">
    <property type="interactions" value="2610"/>
</dbReference>
<dbReference type="STRING" id="9913.ENSBTAP00000006866"/>
<dbReference type="iPTMnet" id="Q58DW0"/>
<dbReference type="PaxDb" id="9913-ENSBTAP00000006866"/>
<dbReference type="PeptideAtlas" id="Q58DW0"/>
<dbReference type="GeneID" id="510547"/>
<dbReference type="KEGG" id="bta:510547"/>
<dbReference type="CTD" id="6124"/>
<dbReference type="VEuPathDB" id="HostDB:ENSBTAG00000005211"/>
<dbReference type="eggNOG" id="KOG1475">
    <property type="taxonomic scope" value="Eukaryota"/>
</dbReference>
<dbReference type="HOGENOM" id="CLU_026535_4_0_1"/>
<dbReference type="InParanoid" id="Q58DW0"/>
<dbReference type="OMA" id="ALYGTWR"/>
<dbReference type="OrthoDB" id="10259785at2759"/>
<dbReference type="TreeFam" id="TF300593"/>
<dbReference type="Reactome" id="R-BTA-156827">
    <property type="pathway name" value="L13a-mediated translational silencing of Ceruloplasmin expression"/>
</dbReference>
<dbReference type="Reactome" id="R-BTA-1799339">
    <property type="pathway name" value="SRP-dependent cotranslational protein targeting to membrane"/>
</dbReference>
<dbReference type="Reactome" id="R-BTA-6791226">
    <property type="pathway name" value="Major pathway of rRNA processing in the nucleolus and cytosol"/>
</dbReference>
<dbReference type="Reactome" id="R-BTA-72689">
    <property type="pathway name" value="Formation of a pool of free 40S subunits"/>
</dbReference>
<dbReference type="Reactome" id="R-BTA-72706">
    <property type="pathway name" value="GTP hydrolysis and joining of the 60S ribosomal subunit"/>
</dbReference>
<dbReference type="Reactome" id="R-BTA-975956">
    <property type="pathway name" value="Nonsense Mediated Decay (NMD) independent of the Exon Junction Complex (EJC)"/>
</dbReference>
<dbReference type="Reactome" id="R-BTA-975957">
    <property type="pathway name" value="Nonsense Mediated Decay (NMD) enhanced by the Exon Junction Complex (EJC)"/>
</dbReference>
<dbReference type="CD-CODE" id="D7FE2080">
    <property type="entry name" value="Nucleolus"/>
</dbReference>
<dbReference type="Proteomes" id="UP000009136">
    <property type="component" value="Chromosome 10"/>
</dbReference>
<dbReference type="Bgee" id="ENSBTAG00000005211">
    <property type="expression patterns" value="Expressed in adenohypophysis and 106 other cell types or tissues"/>
</dbReference>
<dbReference type="GO" id="GO:0022625">
    <property type="term" value="C:cytosolic large ribosomal subunit"/>
    <property type="evidence" value="ECO:0000318"/>
    <property type="project" value="GO_Central"/>
</dbReference>
<dbReference type="GO" id="GO:0003723">
    <property type="term" value="F:RNA binding"/>
    <property type="evidence" value="ECO:0000318"/>
    <property type="project" value="GO_Central"/>
</dbReference>
<dbReference type="GO" id="GO:0003735">
    <property type="term" value="F:structural constituent of ribosome"/>
    <property type="evidence" value="ECO:0000318"/>
    <property type="project" value="GO_Central"/>
</dbReference>
<dbReference type="GO" id="GO:0006412">
    <property type="term" value="P:translation"/>
    <property type="evidence" value="ECO:0007669"/>
    <property type="project" value="InterPro"/>
</dbReference>
<dbReference type="FunFam" id="3.40.1370.10:FF:000002">
    <property type="entry name" value="60S ribosomal protein L4"/>
    <property type="match status" value="1"/>
</dbReference>
<dbReference type="Gene3D" id="3.40.1370.10">
    <property type="match status" value="1"/>
</dbReference>
<dbReference type="InterPro" id="IPR025755">
    <property type="entry name" value="Ribos_uL4_C_dom"/>
</dbReference>
<dbReference type="InterPro" id="IPR002136">
    <property type="entry name" value="Ribosomal_uL4"/>
</dbReference>
<dbReference type="InterPro" id="IPR023574">
    <property type="entry name" value="Ribosomal_uL4_dom_sf"/>
</dbReference>
<dbReference type="InterPro" id="IPR013000">
    <property type="entry name" value="Ribosomal_uL4_euk/arc_CS"/>
</dbReference>
<dbReference type="InterPro" id="IPR045240">
    <property type="entry name" value="Ribosomal_uL4_euk/arch"/>
</dbReference>
<dbReference type="PANTHER" id="PTHR19431">
    <property type="entry name" value="60S RIBOSOMAL PROTEIN L4"/>
    <property type="match status" value="1"/>
</dbReference>
<dbReference type="Pfam" id="PF14374">
    <property type="entry name" value="Ribos_L4_asso_C"/>
    <property type="match status" value="1"/>
</dbReference>
<dbReference type="Pfam" id="PF00573">
    <property type="entry name" value="Ribosomal_L4"/>
    <property type="match status" value="1"/>
</dbReference>
<dbReference type="SUPFAM" id="SSF52166">
    <property type="entry name" value="Ribosomal protein L4"/>
    <property type="match status" value="1"/>
</dbReference>
<dbReference type="PROSITE" id="PS00939">
    <property type="entry name" value="RIBOSOMAL_L1E"/>
    <property type="match status" value="1"/>
</dbReference>
<sequence length="422" mass="47412">MACARPLISVYSEKGESSGKNVTLPAVFKAPIRPDIVNFVHTNLRKNNRQPYAVSELAGHQTSAESWGTGRAVARIPRVRGGGTHRSGQGAFGNMCRGGRMFAPTKTWRRWHRRVNTTQKRYAICSALAASALPALVMSKGHRIEEVPELPLVVEDKVEGYKKTKEAVLLLKKLKAWNDIKKVYASQRMRAGKGKMRNRRRIQRRGPCIIYNEDNGIIKAFRNIPGITLLNVSKLNILKLAPGGHVGRFCIWTESAFRKLDELYGTWRKAASLKSNYNLPMHKMLNTDLSRILKSPEIQRALRAPRKKIHRRVLKKNPLKNLRIMLKLNPYAKTMRRNTILRQARNHKIRMDKAAAALEAKSDQKGVQGKKPVVGNKEKKAVGDKKLKKPVVGKKAAGTKKPAAEKKPTEKKPTSEEKKAAA</sequence>
<keyword id="KW-0007">Acetylation</keyword>
<keyword id="KW-0164">Citrullination</keyword>
<keyword id="KW-0963">Cytoplasm</keyword>
<keyword id="KW-1017">Isopeptide bond</keyword>
<keyword id="KW-0488">Methylation</keyword>
<keyword id="KW-0597">Phosphoprotein</keyword>
<keyword id="KW-1185">Reference proteome</keyword>
<keyword id="KW-0687">Ribonucleoprotein</keyword>
<keyword id="KW-0689">Ribosomal protein</keyword>
<keyword id="KW-0832">Ubl conjugation</keyword>
<organism>
    <name type="scientific">Bos taurus</name>
    <name type="common">Bovine</name>
    <dbReference type="NCBI Taxonomy" id="9913"/>
    <lineage>
        <taxon>Eukaryota</taxon>
        <taxon>Metazoa</taxon>
        <taxon>Chordata</taxon>
        <taxon>Craniata</taxon>
        <taxon>Vertebrata</taxon>
        <taxon>Euteleostomi</taxon>
        <taxon>Mammalia</taxon>
        <taxon>Eutheria</taxon>
        <taxon>Laurasiatheria</taxon>
        <taxon>Artiodactyla</taxon>
        <taxon>Ruminantia</taxon>
        <taxon>Pecora</taxon>
        <taxon>Bovidae</taxon>
        <taxon>Bovinae</taxon>
        <taxon>Bos</taxon>
    </lineage>
</organism>
<name>RL4_BOVIN</name>
<proteinExistence type="evidence at transcript level"/>
<comment type="function">
    <text evidence="1">Component of the large ribosomal subunit. The ribosome is a large ribonucleoprotein complex responsible for the synthesis of proteins in the cell.</text>
</comment>
<comment type="subunit">
    <text evidence="1 2">Component of the large ribosomal subunit. May bind IPO9 with low affinity (By similarity). Interacts with RBM3 (By similarity).</text>
</comment>
<comment type="subcellular location">
    <subcellularLocation>
        <location evidence="1">Cytoplasm</location>
    </subcellularLocation>
</comment>
<comment type="PTM">
    <text evidence="3">Citrullinated by PADI4.</text>
</comment>
<comment type="similarity">
    <text evidence="5">Belongs to the universal ribosomal protein uL4 family.</text>
</comment>
<feature type="initiator methionine" description="Removed" evidence="1">
    <location>
        <position position="1"/>
    </location>
</feature>
<feature type="chain" id="PRO_0000129348" description="Large ribosomal subunit protein uL4">
    <location>
        <begin position="2"/>
        <end position="422"/>
    </location>
</feature>
<feature type="region of interest" description="Disordered" evidence="4">
    <location>
        <begin position="359"/>
        <end position="422"/>
    </location>
</feature>
<feature type="compositionally biased region" description="Basic and acidic residues" evidence="4">
    <location>
        <begin position="376"/>
        <end position="385"/>
    </location>
</feature>
<feature type="compositionally biased region" description="Basic and acidic residues" evidence="4">
    <location>
        <begin position="402"/>
        <end position="422"/>
    </location>
</feature>
<feature type="modified residue" description="N-acetylalanine" evidence="1">
    <location>
        <position position="2"/>
    </location>
</feature>
<feature type="modified residue" description="N6-acetyllysine" evidence="1">
    <location>
        <position position="14"/>
    </location>
</feature>
<feature type="modified residue" description="Omega-N-methylarginine" evidence="3">
    <location>
        <position position="97"/>
    </location>
</feature>
<feature type="modified residue" description="N6-acetyllysine" evidence="1">
    <location>
        <position position="106"/>
    </location>
</feature>
<feature type="modified residue" description="N6-acetyllysine" evidence="3">
    <location>
        <position position="259"/>
    </location>
</feature>
<feature type="modified residue" description="Phosphothreonine" evidence="1">
    <location>
        <position position="266"/>
    </location>
</feature>
<feature type="modified residue" description="Phosphoserine" evidence="2">
    <location>
        <position position="290"/>
    </location>
</feature>
<feature type="modified residue" description="Phosphoserine" evidence="1">
    <location>
        <position position="295"/>
    </location>
</feature>
<feature type="modified residue" description="Citrulline" evidence="3">
    <location>
        <position position="300"/>
    </location>
</feature>
<feature type="modified residue" description="N6-acetyllysine" evidence="1">
    <location>
        <position position="333"/>
    </location>
</feature>
<feature type="modified residue" description="N6-acetyllysine" evidence="3">
    <location>
        <position position="353"/>
    </location>
</feature>
<feature type="modified residue" description="N6-acetyllysine; alternate" evidence="3">
    <location>
        <position position="361"/>
    </location>
</feature>
<feature type="modified residue" description="Phosphoserine" evidence="1">
    <location>
        <position position="362"/>
    </location>
</feature>
<feature type="cross-link" description="Glycyl lysine isopeptide (Lys-Gly) (interchain with G-Cter in SUMO2)" evidence="1">
    <location>
        <position position="239"/>
    </location>
</feature>
<feature type="cross-link" description="Glycyl lysine isopeptide (Lys-Gly) (interchain with G-Cter in SUMO2)" evidence="1">
    <location>
        <position position="327"/>
    </location>
</feature>
<feature type="cross-link" description="Glycyl lysine isopeptide (Lys-Gly) (interchain with G-Cter in SUMO1); alternate" evidence="1">
    <location>
        <position position="361"/>
    </location>
</feature>
<protein>
    <recommendedName>
        <fullName evidence="5">Large ribosomal subunit protein uL4</fullName>
    </recommendedName>
    <alternativeName>
        <fullName>60S ribosomal protein L4</fullName>
    </alternativeName>
</protein>